<reference evidence="10" key="1">
    <citation type="journal article" date="1998" name="Science">
        <title>Genome sequence of the nematode C. elegans: a platform for investigating biology.</title>
        <authorList>
            <consortium name="The C. elegans sequencing consortium"/>
        </authorList>
    </citation>
    <scope>NUCLEOTIDE SEQUENCE [LARGE SCALE GENOMIC DNA]</scope>
    <source>
        <strain evidence="10">Bristol N2</strain>
    </source>
</reference>
<reference evidence="9" key="2">
    <citation type="journal article" date="2003" name="Dev. Biol.">
        <title>M142.2 (cut-6), a novel Caenorhabditis elegans matrix gene important for dauer body shape.</title>
        <authorList>
            <person name="Muriel J.M."/>
            <person name="Brannan M."/>
            <person name="Taylor K."/>
            <person name="Johnstone I.L."/>
            <person name="Lithgow G.J."/>
            <person name="Tuckwell D."/>
        </authorList>
    </citation>
    <scope>FUNCTION</scope>
    <scope>DEVELOPMENTAL STAGE</scope>
    <scope>DISRUPTION PHENOTYPE</scope>
</reference>
<reference evidence="9" key="3">
    <citation type="journal article" date="2005" name="Dev. Biol.">
        <title>The Zona Pellucida domain containing proteins, CUT-1, CUT-3 and CUT-5, play essential roles in the development of the larval alae in Caenorhabditis elegans.</title>
        <authorList>
            <person name="Sapio M.R."/>
            <person name="Hilliard M.A."/>
            <person name="Cermola M."/>
            <person name="Favre R."/>
            <person name="Bazzicalupo P."/>
        </authorList>
    </citation>
    <scope>FUNCTION</scope>
    <scope>DISRUPTION PHENOTYPE</scope>
</reference>
<reference evidence="9" key="4">
    <citation type="journal article" date="2019" name="Genetics">
        <title>Epidermal Remodeling in Caenorhabditis elegans Dauers Requires the Nidogen Domain Protein DEX-1.</title>
        <authorList>
            <person name="Flatt K.M."/>
            <person name="Beshers C."/>
            <person name="Unal C."/>
            <person name="Cohen J.D."/>
            <person name="Sundaram M.V."/>
            <person name="Schroeder N.E."/>
        </authorList>
    </citation>
    <scope>FUNCTION</scope>
</reference>
<proteinExistence type="evidence at protein level"/>
<gene>
    <name evidence="8 11" type="primary">cut-6</name>
    <name evidence="11" type="ORF">M142.2</name>
</gene>
<dbReference type="EMBL" id="BX284603">
    <property type="protein sequence ID" value="CAA97806.2"/>
    <property type="molecule type" value="Genomic_DNA"/>
</dbReference>
<dbReference type="PIR" id="T23760">
    <property type="entry name" value="T23760"/>
</dbReference>
<dbReference type="RefSeq" id="NP_499400.2">
    <property type="nucleotide sequence ID" value="NM_066999.8"/>
</dbReference>
<dbReference type="SMR" id="Q21540"/>
<dbReference type="FunCoup" id="Q21540">
    <property type="interactions" value="7"/>
</dbReference>
<dbReference type="STRING" id="6239.M142.2.2"/>
<dbReference type="GlyCosmos" id="Q21540">
    <property type="glycosylation" value="1 site, No reported glycans"/>
</dbReference>
<dbReference type="PaxDb" id="6239-M142.2.2"/>
<dbReference type="EnsemblMetazoa" id="M142.2.1">
    <property type="protein sequence ID" value="M142.2.1"/>
    <property type="gene ID" value="WBGene00000853"/>
</dbReference>
<dbReference type="GeneID" id="176520"/>
<dbReference type="KEGG" id="cel:CELE_M142.2"/>
<dbReference type="UCSC" id="M142.2.1">
    <property type="organism name" value="c. elegans"/>
</dbReference>
<dbReference type="AGR" id="WB:WBGene00000853"/>
<dbReference type="CTD" id="176520"/>
<dbReference type="WormBase" id="M142.2">
    <property type="protein sequence ID" value="CE35746"/>
    <property type="gene ID" value="WBGene00000853"/>
    <property type="gene designation" value="cut-6"/>
</dbReference>
<dbReference type="eggNOG" id="KOG1217">
    <property type="taxonomic scope" value="Eukaryota"/>
</dbReference>
<dbReference type="HOGENOM" id="CLU_473470_0_0_1"/>
<dbReference type="InParanoid" id="Q21540"/>
<dbReference type="OMA" id="HTLFMTK"/>
<dbReference type="OrthoDB" id="6132182at2759"/>
<dbReference type="PhylomeDB" id="Q21540"/>
<dbReference type="PRO" id="PR:Q21540"/>
<dbReference type="Proteomes" id="UP000001940">
    <property type="component" value="Chromosome III"/>
</dbReference>
<dbReference type="Bgee" id="WBGene00000853">
    <property type="expression patterns" value="Expressed in embryo and 3 other cell types or tissues"/>
</dbReference>
<dbReference type="GO" id="GO:0060111">
    <property type="term" value="C:alae of collagen and cuticulin-based cuticle extracellular matrix"/>
    <property type="evidence" value="ECO:0000314"/>
    <property type="project" value="WormBase"/>
</dbReference>
<dbReference type="GO" id="GO:0005886">
    <property type="term" value="C:plasma membrane"/>
    <property type="evidence" value="ECO:0007669"/>
    <property type="project" value="UniProtKB-SubCell"/>
</dbReference>
<dbReference type="GO" id="GO:0042302">
    <property type="term" value="F:structural constituent of cuticle"/>
    <property type="evidence" value="ECO:0007669"/>
    <property type="project" value="UniProtKB-KW"/>
</dbReference>
<dbReference type="FunFam" id="3.40.50.410:FF:000113">
    <property type="entry name" value="Protein CBR-CUT-6"/>
    <property type="match status" value="1"/>
</dbReference>
<dbReference type="Gene3D" id="3.40.50.410">
    <property type="entry name" value="von Willebrand factor, type A domain"/>
    <property type="match status" value="1"/>
</dbReference>
<dbReference type="InterPro" id="IPR056953">
    <property type="entry name" value="CUT_N"/>
</dbReference>
<dbReference type="InterPro" id="IPR051962">
    <property type="entry name" value="Cuticlin"/>
</dbReference>
<dbReference type="InterPro" id="IPR002035">
    <property type="entry name" value="VWF_A"/>
</dbReference>
<dbReference type="InterPro" id="IPR036465">
    <property type="entry name" value="vWFA_dom_sf"/>
</dbReference>
<dbReference type="InterPro" id="IPR001507">
    <property type="entry name" value="ZP_dom"/>
</dbReference>
<dbReference type="PANTHER" id="PTHR22907:SF47">
    <property type="entry name" value="CUTICLIN-6"/>
    <property type="match status" value="1"/>
</dbReference>
<dbReference type="PANTHER" id="PTHR22907">
    <property type="entry name" value="GH04558P"/>
    <property type="match status" value="1"/>
</dbReference>
<dbReference type="Pfam" id="PF25301">
    <property type="entry name" value="CUT_C"/>
    <property type="match status" value="1"/>
</dbReference>
<dbReference type="Pfam" id="PF25057">
    <property type="entry name" value="CUT_N"/>
    <property type="match status" value="1"/>
</dbReference>
<dbReference type="Pfam" id="PF00092">
    <property type="entry name" value="VWA"/>
    <property type="match status" value="1"/>
</dbReference>
<dbReference type="PRINTS" id="PR00453">
    <property type="entry name" value="VWFADOMAIN"/>
</dbReference>
<dbReference type="SMART" id="SM00327">
    <property type="entry name" value="VWA"/>
    <property type="match status" value="1"/>
</dbReference>
<dbReference type="SMART" id="SM00241">
    <property type="entry name" value="ZP"/>
    <property type="match status" value="1"/>
</dbReference>
<dbReference type="SUPFAM" id="SSF53300">
    <property type="entry name" value="vWA-like"/>
    <property type="match status" value="1"/>
</dbReference>
<dbReference type="PROSITE" id="PS50234">
    <property type="entry name" value="VWFA"/>
    <property type="match status" value="1"/>
</dbReference>
<dbReference type="PROSITE" id="PS51034">
    <property type="entry name" value="ZP_2"/>
    <property type="match status" value="1"/>
</dbReference>
<accession>Q21540</accession>
<organism evidence="10">
    <name type="scientific">Caenorhabditis elegans</name>
    <dbReference type="NCBI Taxonomy" id="6239"/>
    <lineage>
        <taxon>Eukaryota</taxon>
        <taxon>Metazoa</taxon>
        <taxon>Ecdysozoa</taxon>
        <taxon>Nematoda</taxon>
        <taxon>Chromadorea</taxon>
        <taxon>Rhabditida</taxon>
        <taxon>Rhabditina</taxon>
        <taxon>Rhabditomorpha</taxon>
        <taxon>Rhabditoidea</taxon>
        <taxon>Rhabditidae</taxon>
        <taxon>Peloderinae</taxon>
        <taxon>Caenorhabditis</taxon>
    </lineage>
</organism>
<feature type="signal peptide" evidence="1">
    <location>
        <begin position="1"/>
        <end position="24"/>
    </location>
</feature>
<feature type="chain" id="PRO_5004199393" description="Cuticlin-6">
    <location>
        <begin position="25"/>
        <end position="572"/>
    </location>
</feature>
<feature type="topological domain" description="Extracellular" evidence="9">
    <location>
        <begin position="25"/>
        <end position="541"/>
    </location>
</feature>
<feature type="transmembrane region" description="Helical" evidence="1">
    <location>
        <begin position="542"/>
        <end position="562"/>
    </location>
</feature>
<feature type="topological domain" description="Cytoplasmic" evidence="9">
    <location>
        <begin position="563"/>
        <end position="572"/>
    </location>
</feature>
<feature type="domain" description="VWFA" evidence="2">
    <location>
        <begin position="47"/>
        <end position="216"/>
    </location>
</feature>
<feature type="domain" description="ZP" evidence="3">
    <location>
        <begin position="233"/>
        <end position="479"/>
    </location>
</feature>
<feature type="glycosylation site" description="N-linked (GlcNAc...) asparagine" evidence="4">
    <location>
        <position position="78"/>
    </location>
</feature>
<protein>
    <recommendedName>
        <fullName evidence="11">Cuticlin-6</fullName>
    </recommendedName>
    <alternativeName>
        <fullName evidence="8">Cuticulin 6</fullName>
    </alternativeName>
</protein>
<keyword id="KW-1003">Cell membrane</keyword>
<keyword id="KW-0193">Cuticle</keyword>
<keyword id="KW-0325">Glycoprotein</keyword>
<keyword id="KW-0472">Membrane</keyword>
<keyword id="KW-1185">Reference proteome</keyword>
<keyword id="KW-0732">Signal</keyword>
<keyword id="KW-0812">Transmembrane</keyword>
<keyword id="KW-1133">Transmembrane helix</keyword>
<name>CUT6_CAEEL</name>
<sequence length="572" mass="64132">MRPIPYDISLSITSFLSLILICSANPIDNGLVDSELIHECVTHKAVEVILLLDASGSIGDDTFKKQLSFAMHLASRLNISEDGSHMALIQYAETPKLEFSLGQFNHPTQLEWAIQRIEYQSGATNTGQALRLTLEKGLQGARPGIPKVAIVITDGQSQDDVSEPSQLLRDADVMVYAIGVTNLVNVHQLHQMTGNPVRVFTVESFEQLDRALADSLTWSMCKTEFRPGTPEIICGPDRIGVKASTKQPFEGNVFVMDHYHDEECRAGPEKFPDSRSIGLTVPFSACNVHRYRSLNPKGIFVEVSIVFMFHSLFMTKTDQTVKVQCFYMEADKHVTVPLSVSMITTVFREQIYQMPQCAYTLRKGAPDGPIVRFATLGESVYHRWECIEVEGADKDTFGMLVHSCYVDNGYGDRVDILDSNGCGLDAVLLSTPDYDTSLRLATKPYHVFKYADRPVLQFQCQITLCLKYDGGCEGITPPQNCKKLPGEDGHHHHHHPEKRRKLVRRLADGVGTIDVFTDSVTVLEQEPACQQPLPYPLINTNLWIMGIITLTNIFVFILTVWFTFRKRRCKPA</sequence>
<evidence type="ECO:0000255" key="1"/>
<evidence type="ECO:0000255" key="2">
    <source>
        <dbReference type="PROSITE-ProRule" id="PRU00219"/>
    </source>
</evidence>
<evidence type="ECO:0000255" key="3">
    <source>
        <dbReference type="PROSITE-ProRule" id="PRU00375"/>
    </source>
</evidence>
<evidence type="ECO:0000255" key="4">
    <source>
        <dbReference type="PROSITE-ProRule" id="PRU00498"/>
    </source>
</evidence>
<evidence type="ECO:0000269" key="5">
    <source>
    </source>
</evidence>
<evidence type="ECO:0000269" key="6">
    <source>
    </source>
</evidence>
<evidence type="ECO:0000269" key="7">
    <source>
    </source>
</evidence>
<evidence type="ECO:0000303" key="8">
    <source>
    </source>
</evidence>
<evidence type="ECO:0000305" key="9"/>
<evidence type="ECO:0000312" key="10">
    <source>
        <dbReference type="Proteomes" id="UP000001940"/>
    </source>
</evidence>
<evidence type="ECO:0000312" key="11">
    <source>
        <dbReference type="WormBase" id="M142.2"/>
    </source>
</evidence>
<comment type="function">
    <text evidence="5 6 7">Plays a role in alae formation in dauer larvae probably by regulating cuticle assembly.</text>
</comment>
<comment type="subcellular location">
    <subcellularLocation>
        <location evidence="1">Cell membrane</location>
        <topology evidence="9">Single-pass type I membrane protein</topology>
    </subcellularLocation>
</comment>
<comment type="developmental stage">
    <text evidence="5">Expressed in late embryos (PubMed:12921736). At the L1 larval stage and during the dauer stages, it is expressed adjacent to the lateral edges of the alae (at protein level) (PubMed:12921736). In the L2 pre-dauer stage, expressed in the head hypodermal cells hyp3, hyp4, hyp5, hyp6 and hyp7, along the main body and in tail hyp8, hyp9, hyp10 and hyp11 (PubMed:12921736). Not expressed at adult stages (at protein level) (PubMed:12921736).</text>
</comment>
<comment type="disruption phenotype">
    <text evidence="5 6">RNAi-mediated knockdown results in shorter and fatter dauer phase animals (dumpy phenotype) (PubMed:12921736, PubMed:15936343). RNAi-mediated knockdown results in a folded pharynx in some animals (PubMed:12921736). RNAi-mediated knockdown results in no alae formation (PubMed:12921736). However, other studies indicate that RNAi-mediated knockdown results in partially formed alae (PubMed:15936343).</text>
</comment>